<reference key="1">
    <citation type="journal article" date="2007" name="PLoS ONE">
        <title>Molecular correlates of host specialization in Staphylococcus aureus.</title>
        <authorList>
            <person name="Herron-Olson L."/>
            <person name="Fitzgerald J.R."/>
            <person name="Musser J.M."/>
            <person name="Kapur V."/>
        </authorList>
    </citation>
    <scope>NUCLEOTIDE SEQUENCE [LARGE SCALE GENOMIC DNA]</scope>
    <source>
        <strain>bovine RF122 / ET3-1</strain>
    </source>
</reference>
<evidence type="ECO:0000255" key="1">
    <source>
        <dbReference type="HAMAP-Rule" id="MF_00083"/>
    </source>
</evidence>
<comment type="function">
    <text evidence="1">Hydrolyzes ribosome-free peptidyl-tRNAs (with 1 or more amino acids incorporated), which drop off the ribosome during protein synthesis, or as a result of ribosome stalling.</text>
</comment>
<comment type="function">
    <text evidence="1">Catalyzes the release of premature peptidyl moieties from peptidyl-tRNA molecules trapped in stalled 50S ribosomal subunits, and thus maintains levels of free tRNAs and 50S ribosomes.</text>
</comment>
<comment type="catalytic activity">
    <reaction evidence="1">
        <text>an N-acyl-L-alpha-aminoacyl-tRNA + H2O = an N-acyl-L-amino acid + a tRNA + H(+)</text>
        <dbReference type="Rhea" id="RHEA:54448"/>
        <dbReference type="Rhea" id="RHEA-COMP:10123"/>
        <dbReference type="Rhea" id="RHEA-COMP:13883"/>
        <dbReference type="ChEBI" id="CHEBI:15377"/>
        <dbReference type="ChEBI" id="CHEBI:15378"/>
        <dbReference type="ChEBI" id="CHEBI:59874"/>
        <dbReference type="ChEBI" id="CHEBI:78442"/>
        <dbReference type="ChEBI" id="CHEBI:138191"/>
        <dbReference type="EC" id="3.1.1.29"/>
    </reaction>
</comment>
<comment type="subunit">
    <text evidence="1">Monomer.</text>
</comment>
<comment type="subcellular location">
    <subcellularLocation>
        <location evidence="1">Cytoplasm</location>
    </subcellularLocation>
</comment>
<comment type="similarity">
    <text evidence="1">Belongs to the PTH family.</text>
</comment>
<proteinExistence type="inferred from homology"/>
<name>PTH_STAAB</name>
<accession>Q2YVY3</accession>
<organism>
    <name type="scientific">Staphylococcus aureus (strain bovine RF122 / ET3-1)</name>
    <dbReference type="NCBI Taxonomy" id="273036"/>
    <lineage>
        <taxon>Bacteria</taxon>
        <taxon>Bacillati</taxon>
        <taxon>Bacillota</taxon>
        <taxon>Bacilli</taxon>
        <taxon>Bacillales</taxon>
        <taxon>Staphylococcaceae</taxon>
        <taxon>Staphylococcus</taxon>
    </lineage>
</organism>
<keyword id="KW-0963">Cytoplasm</keyword>
<keyword id="KW-0378">Hydrolase</keyword>
<keyword id="KW-0694">RNA-binding</keyword>
<keyword id="KW-0820">tRNA-binding</keyword>
<feature type="chain" id="PRO_0000264112" description="Peptidyl-tRNA hydrolase">
    <location>
        <begin position="1"/>
        <end position="190"/>
    </location>
</feature>
<feature type="active site" description="Proton acceptor" evidence="1">
    <location>
        <position position="19"/>
    </location>
</feature>
<feature type="binding site" evidence="1">
    <location>
        <position position="14"/>
    </location>
    <ligand>
        <name>tRNA</name>
        <dbReference type="ChEBI" id="CHEBI:17843"/>
    </ligand>
</feature>
<feature type="binding site" evidence="1">
    <location>
        <position position="64"/>
    </location>
    <ligand>
        <name>tRNA</name>
        <dbReference type="ChEBI" id="CHEBI:17843"/>
    </ligand>
</feature>
<feature type="binding site" evidence="1">
    <location>
        <position position="66"/>
    </location>
    <ligand>
        <name>tRNA</name>
        <dbReference type="ChEBI" id="CHEBI:17843"/>
    </ligand>
</feature>
<feature type="binding site" evidence="1">
    <location>
        <position position="112"/>
    </location>
    <ligand>
        <name>tRNA</name>
        <dbReference type="ChEBI" id="CHEBI:17843"/>
    </ligand>
</feature>
<feature type="site" description="Discriminates between blocked and unblocked aminoacyl-tRNA" evidence="1">
    <location>
        <position position="9"/>
    </location>
</feature>
<feature type="site" description="Stabilizes the basic form of H active site to accept a proton" evidence="1">
    <location>
        <position position="91"/>
    </location>
</feature>
<gene>
    <name evidence="1" type="primary">pth</name>
    <name type="ordered locus">SAB0451</name>
</gene>
<sequence>MKCIVGLGNIGKRFELTRHNIGFEVVDYILEKNNFSLDKQKFKGAYTIERMNGDKVLFIEPMTMMNLSGEAVAPIMDYYNVNPEDLIVLYDDLDLEQGQVRLRQKGSAGGHNGMKSIIKMLGTDQFKRIRIGVGRPTNGMTVPDYVLQRFSNDEMVTMEKVIEHAGRAIEKFVETSRFDHVMNEFNGEVK</sequence>
<protein>
    <recommendedName>
        <fullName evidence="1">Peptidyl-tRNA hydrolase</fullName>
        <shortName evidence="1">Pth</shortName>
        <ecNumber evidence="1">3.1.1.29</ecNumber>
    </recommendedName>
</protein>
<dbReference type="EC" id="3.1.1.29" evidence="1"/>
<dbReference type="EMBL" id="AJ938182">
    <property type="protein sequence ID" value="CAI80139.1"/>
    <property type="molecule type" value="Genomic_DNA"/>
</dbReference>
<dbReference type="RefSeq" id="WP_000649792.1">
    <property type="nucleotide sequence ID" value="NC_007622.1"/>
</dbReference>
<dbReference type="SMR" id="Q2YVY3"/>
<dbReference type="KEGG" id="sab:SAB0451"/>
<dbReference type="HOGENOM" id="CLU_062456_4_1_9"/>
<dbReference type="GO" id="GO:0005737">
    <property type="term" value="C:cytoplasm"/>
    <property type="evidence" value="ECO:0007669"/>
    <property type="project" value="UniProtKB-SubCell"/>
</dbReference>
<dbReference type="GO" id="GO:0004045">
    <property type="term" value="F:peptidyl-tRNA hydrolase activity"/>
    <property type="evidence" value="ECO:0007669"/>
    <property type="project" value="UniProtKB-UniRule"/>
</dbReference>
<dbReference type="GO" id="GO:0000049">
    <property type="term" value="F:tRNA binding"/>
    <property type="evidence" value="ECO:0007669"/>
    <property type="project" value="UniProtKB-UniRule"/>
</dbReference>
<dbReference type="GO" id="GO:0006515">
    <property type="term" value="P:protein quality control for misfolded or incompletely synthesized proteins"/>
    <property type="evidence" value="ECO:0007669"/>
    <property type="project" value="UniProtKB-UniRule"/>
</dbReference>
<dbReference type="GO" id="GO:0072344">
    <property type="term" value="P:rescue of stalled ribosome"/>
    <property type="evidence" value="ECO:0007669"/>
    <property type="project" value="UniProtKB-UniRule"/>
</dbReference>
<dbReference type="CDD" id="cd00462">
    <property type="entry name" value="PTH"/>
    <property type="match status" value="1"/>
</dbReference>
<dbReference type="FunFam" id="3.40.50.1470:FF:000001">
    <property type="entry name" value="Peptidyl-tRNA hydrolase"/>
    <property type="match status" value="1"/>
</dbReference>
<dbReference type="Gene3D" id="3.40.50.1470">
    <property type="entry name" value="Peptidyl-tRNA hydrolase"/>
    <property type="match status" value="1"/>
</dbReference>
<dbReference type="HAMAP" id="MF_00083">
    <property type="entry name" value="Pept_tRNA_hydro_bact"/>
    <property type="match status" value="1"/>
</dbReference>
<dbReference type="InterPro" id="IPR001328">
    <property type="entry name" value="Pept_tRNA_hydro"/>
</dbReference>
<dbReference type="InterPro" id="IPR018171">
    <property type="entry name" value="Pept_tRNA_hydro_CS"/>
</dbReference>
<dbReference type="InterPro" id="IPR036416">
    <property type="entry name" value="Pept_tRNA_hydro_sf"/>
</dbReference>
<dbReference type="NCBIfam" id="TIGR00447">
    <property type="entry name" value="pth"/>
    <property type="match status" value="1"/>
</dbReference>
<dbReference type="PANTHER" id="PTHR17224">
    <property type="entry name" value="PEPTIDYL-TRNA HYDROLASE"/>
    <property type="match status" value="1"/>
</dbReference>
<dbReference type="PANTHER" id="PTHR17224:SF1">
    <property type="entry name" value="PEPTIDYL-TRNA HYDROLASE"/>
    <property type="match status" value="1"/>
</dbReference>
<dbReference type="Pfam" id="PF01195">
    <property type="entry name" value="Pept_tRNA_hydro"/>
    <property type="match status" value="1"/>
</dbReference>
<dbReference type="SUPFAM" id="SSF53178">
    <property type="entry name" value="Peptidyl-tRNA hydrolase-like"/>
    <property type="match status" value="1"/>
</dbReference>
<dbReference type="PROSITE" id="PS01195">
    <property type="entry name" value="PEPT_TRNA_HYDROL_1"/>
    <property type="match status" value="1"/>
</dbReference>
<dbReference type="PROSITE" id="PS01196">
    <property type="entry name" value="PEPT_TRNA_HYDROL_2"/>
    <property type="match status" value="1"/>
</dbReference>